<name>PVK21_SHELA</name>
<feature type="peptide" id="PRO_0000044279" description="Periviscerokinin-2.1">
    <location>
        <begin position="1"/>
        <end position="12"/>
    </location>
</feature>
<feature type="modified residue" description="Valine amide" evidence="2 3">
    <location>
        <position position="12"/>
    </location>
</feature>
<keyword id="KW-0027">Amidation</keyword>
<keyword id="KW-0903">Direct protein sequencing</keyword>
<keyword id="KW-0527">Neuropeptide</keyword>
<keyword id="KW-0964">Secreted</keyword>
<comment type="function">
    <text evidence="4">Mediates visceral muscle contractile activity (myotropic activity).</text>
</comment>
<comment type="subcellular location">
    <subcellularLocation>
        <location evidence="4">Secreted</location>
    </subcellularLocation>
</comment>
<comment type="mass spectrometry" mass="1189.6" method="MALDI" evidence="2"/>
<comment type="similarity">
    <text evidence="1">Belongs to the periviscerokinin family.</text>
</comment>
<evidence type="ECO:0000255" key="1"/>
<evidence type="ECO:0000269" key="2">
    <source>
    </source>
</evidence>
<evidence type="ECO:0000269" key="3">
    <source>
    </source>
</evidence>
<evidence type="ECO:0000305" key="4"/>
<sequence length="12" mass="1190">GSSSGLISMPRV</sequence>
<dbReference type="GO" id="GO:0005576">
    <property type="term" value="C:extracellular region"/>
    <property type="evidence" value="ECO:0007669"/>
    <property type="project" value="UniProtKB-SubCell"/>
</dbReference>
<dbReference type="GO" id="GO:0007218">
    <property type="term" value="P:neuropeptide signaling pathway"/>
    <property type="evidence" value="ECO:0007669"/>
    <property type="project" value="UniProtKB-KW"/>
</dbReference>
<dbReference type="InterPro" id="IPR013231">
    <property type="entry name" value="Periviscerokinin"/>
</dbReference>
<dbReference type="Pfam" id="PF08259">
    <property type="entry name" value="Periviscerokin"/>
    <property type="match status" value="1"/>
</dbReference>
<proteinExistence type="evidence at protein level"/>
<accession>P84439</accession>
<protein>
    <recommendedName>
        <fullName>Periviscerokinin-2.1</fullName>
    </recommendedName>
    <alternativeName>
        <fullName>Pea-PVK-2-like peptide</fullName>
    </alternativeName>
    <alternativeName>
        <fullName>Periviscerokinin-3</fullName>
        <shortName>SheLa-PVK-3</shortName>
    </alternativeName>
</protein>
<organism>
    <name type="scientific">Shelfordella lateralis</name>
    <name type="common">Turkestan cockroach</name>
    <name type="synonym">Periplaneta lateralis</name>
    <dbReference type="NCBI Taxonomy" id="36981"/>
    <lineage>
        <taxon>Eukaryota</taxon>
        <taxon>Metazoa</taxon>
        <taxon>Ecdysozoa</taxon>
        <taxon>Arthropoda</taxon>
        <taxon>Hexapoda</taxon>
        <taxon>Insecta</taxon>
        <taxon>Pterygota</taxon>
        <taxon>Neoptera</taxon>
        <taxon>Polyneoptera</taxon>
        <taxon>Dictyoptera</taxon>
        <taxon>Blattodea</taxon>
        <taxon>Blattoidea</taxon>
        <taxon>Blattidae</taxon>
        <taxon>Blattinae</taxon>
        <taxon>Periplaneta</taxon>
    </lineage>
</organism>
<reference evidence="4" key="1">
    <citation type="journal article" date="2005" name="Peptides">
        <title>Peptidomics of neurohemal organs from species of the cockroach family Blattidae: how do neuropeptides of closely related species differ?</title>
        <authorList>
            <person name="Predel R."/>
            <person name="Gaede G."/>
        </authorList>
    </citation>
    <scope>PROTEIN SEQUENCE</scope>
    <scope>MASS SPECTROMETRY</scope>
    <scope>AMIDATION AT VAL-12</scope>
    <source>
        <tissue evidence="2">Abdominal perisympathetic organs</tissue>
    </source>
</reference>
<reference key="2">
    <citation type="journal article" date="2009" name="BMC Evol. Biol.">
        <title>A proteomic approach for studying insect phylogeny: CAPA peptides of ancient insect taxa (Dictyoptera, Blattoptera) as a test case.</title>
        <authorList>
            <person name="Roth S."/>
            <person name="Fromm B."/>
            <person name="Gaede G."/>
            <person name="Predel R."/>
        </authorList>
    </citation>
    <scope>PROTEIN SEQUENCE</scope>
    <scope>AMIDATION AT VAL-12</scope>
    <source>
        <tissue>Abdominal perisympathetic organs</tissue>
    </source>
</reference>